<gene>
    <name type="primary">ubtf-b</name>
    <name type="synonym">ubf2</name>
</gene>
<organism>
    <name type="scientific">Xenopus laevis</name>
    <name type="common">African clawed frog</name>
    <dbReference type="NCBI Taxonomy" id="8355"/>
    <lineage>
        <taxon>Eukaryota</taxon>
        <taxon>Metazoa</taxon>
        <taxon>Chordata</taxon>
        <taxon>Craniata</taxon>
        <taxon>Vertebrata</taxon>
        <taxon>Euteleostomi</taxon>
        <taxon>Amphibia</taxon>
        <taxon>Batrachia</taxon>
        <taxon>Anura</taxon>
        <taxon>Pipoidea</taxon>
        <taxon>Pipidae</taxon>
        <taxon>Xenopodinae</taxon>
        <taxon>Xenopus</taxon>
        <taxon>Xenopus</taxon>
    </lineage>
</organism>
<dbReference type="EMBL" id="X57561">
    <property type="protein sequence ID" value="CAA40794.1"/>
    <property type="molecule type" value="mRNA"/>
</dbReference>
<dbReference type="EMBL" id="X59863">
    <property type="protein sequence ID" value="CAA42523.1"/>
    <property type="molecule type" value="mRNA"/>
</dbReference>
<dbReference type="PIR" id="S17196">
    <property type="entry name" value="S17196"/>
</dbReference>
<dbReference type="PIR" id="S78454">
    <property type="entry name" value="S78454"/>
</dbReference>
<dbReference type="RefSeq" id="NP_001079429.1">
    <property type="nucleotide sequence ID" value="NM_001085960.1"/>
</dbReference>
<dbReference type="SMR" id="P25980"/>
<dbReference type="BioGRID" id="97359">
    <property type="interactions" value="1"/>
</dbReference>
<dbReference type="GeneID" id="379116"/>
<dbReference type="KEGG" id="xla:379116"/>
<dbReference type="AGR" id="Xenbase:XB-GENE-966569"/>
<dbReference type="CTD" id="379116"/>
<dbReference type="Xenbase" id="XB-GENE-966569">
    <property type="gene designation" value="ubtf.S"/>
</dbReference>
<dbReference type="OrthoDB" id="1919336at2759"/>
<dbReference type="Proteomes" id="UP000186698">
    <property type="component" value="Chromosome 9_10S"/>
</dbReference>
<dbReference type="Bgee" id="379116">
    <property type="expression patterns" value="Expressed in brain and 19 other cell types or tissues"/>
</dbReference>
<dbReference type="GO" id="GO:0005730">
    <property type="term" value="C:nucleolus"/>
    <property type="evidence" value="ECO:0000250"/>
    <property type="project" value="UniProtKB"/>
</dbReference>
<dbReference type="GO" id="GO:0005634">
    <property type="term" value="C:nucleus"/>
    <property type="evidence" value="ECO:0000318"/>
    <property type="project" value="GO_Central"/>
</dbReference>
<dbReference type="GO" id="GO:0001164">
    <property type="term" value="F:RNA polymerase I core promoter sequence-specific DNA binding"/>
    <property type="evidence" value="ECO:0000318"/>
    <property type="project" value="GO_Central"/>
</dbReference>
<dbReference type="GO" id="GO:0001181">
    <property type="term" value="F:RNA polymerase I general transcription initiation factor activity"/>
    <property type="evidence" value="ECO:0000318"/>
    <property type="project" value="GO_Central"/>
</dbReference>
<dbReference type="GO" id="GO:0045943">
    <property type="term" value="P:positive regulation of transcription by RNA polymerase I"/>
    <property type="evidence" value="ECO:0000250"/>
    <property type="project" value="UniProtKB"/>
</dbReference>
<dbReference type="GO" id="GO:0006360">
    <property type="term" value="P:transcription by RNA polymerase I"/>
    <property type="evidence" value="ECO:0000318"/>
    <property type="project" value="GO_Central"/>
</dbReference>
<dbReference type="CDD" id="cd21998">
    <property type="entry name" value="HMG-box_UBF1_rpt1-like"/>
    <property type="match status" value="1"/>
</dbReference>
<dbReference type="CDD" id="cd21999">
    <property type="entry name" value="HMG-box_UBF1_rpt2"/>
    <property type="match status" value="1"/>
</dbReference>
<dbReference type="CDD" id="cd22000">
    <property type="entry name" value="HMG-box_UBF1_rpt3"/>
    <property type="match status" value="1"/>
</dbReference>
<dbReference type="CDD" id="cd22002">
    <property type="entry name" value="HMG-box_UBF1_rpt5"/>
    <property type="match status" value="1"/>
</dbReference>
<dbReference type="CDD" id="cd22003">
    <property type="entry name" value="HMG-box_UBF1_rpt6-like"/>
    <property type="match status" value="1"/>
</dbReference>
<dbReference type="FunFam" id="1.10.30.10:FF:000022">
    <property type="entry name" value="nucleolar transcription factor 1 isoform X2"/>
    <property type="match status" value="1"/>
</dbReference>
<dbReference type="Gene3D" id="1.10.30.10">
    <property type="entry name" value="High mobility group box domain"/>
    <property type="match status" value="5"/>
</dbReference>
<dbReference type="InterPro" id="IPR029215">
    <property type="entry name" value="HMG_box_5"/>
</dbReference>
<dbReference type="InterPro" id="IPR009071">
    <property type="entry name" value="HMG_box_dom"/>
</dbReference>
<dbReference type="InterPro" id="IPR036910">
    <property type="entry name" value="HMG_box_dom_sf"/>
</dbReference>
<dbReference type="InterPro" id="IPR051762">
    <property type="entry name" value="UBF1"/>
</dbReference>
<dbReference type="PANTHER" id="PTHR46318">
    <property type="entry name" value="UPSTREAM BINDING TRANSCRIPTION FACTOR"/>
    <property type="match status" value="1"/>
</dbReference>
<dbReference type="PANTHER" id="PTHR46318:SF3">
    <property type="entry name" value="UPSTREAM BINDING TRANSCRIPTION FACTOR"/>
    <property type="match status" value="1"/>
</dbReference>
<dbReference type="Pfam" id="PF00505">
    <property type="entry name" value="HMG_box"/>
    <property type="match status" value="2"/>
</dbReference>
<dbReference type="Pfam" id="PF09011">
    <property type="entry name" value="HMG_box_2"/>
    <property type="match status" value="1"/>
</dbReference>
<dbReference type="Pfam" id="PF14887">
    <property type="entry name" value="HMG_box_5"/>
    <property type="match status" value="1"/>
</dbReference>
<dbReference type="SMART" id="SM00398">
    <property type="entry name" value="HMG"/>
    <property type="match status" value="5"/>
</dbReference>
<dbReference type="SUPFAM" id="SSF47095">
    <property type="entry name" value="HMG-box"/>
    <property type="match status" value="5"/>
</dbReference>
<dbReference type="PROSITE" id="PS50118">
    <property type="entry name" value="HMG_BOX_2"/>
    <property type="match status" value="5"/>
</dbReference>
<proteinExistence type="evidence at transcript level"/>
<protein>
    <recommendedName>
        <fullName>Nucleolar transcription factor 1-B</fullName>
    </recommendedName>
    <alternativeName>
        <fullName>Upstream-binding factor 1-B</fullName>
        <shortName>UBF-1-B</shortName>
        <shortName>xUBF-2</shortName>
    </alternativeName>
</protein>
<comment type="function">
    <text>UBF recognizes the ribosomal RNA gene promotor and activates transcription mediated by RNA polymerase I through cooperative interactions with the species-specific factor SL1. It binds specifically to the upstream control element.</text>
</comment>
<comment type="subunit">
    <text>XUBF consists of 2 polypeptides of 82 and 85 kDa, encoded by the same or closely related genes.</text>
</comment>
<comment type="subcellular location">
    <subcellularLocation>
        <location>Nucleus</location>
    </subcellularLocation>
</comment>
<reference key="1">
    <citation type="journal article" date="1991" name="EMBO J.">
        <title>xUBF and Rib 1 are both required for formation of a stable polymerase I promoter complex in X. laevis.</title>
        <authorList>
            <person name="McStay B."/>
            <person name="Hu C.H."/>
            <person name="Pikaard C.S."/>
            <person name="Reeder R.H."/>
        </authorList>
    </citation>
    <scope>NUCLEOTIDE SEQUENCE [MRNA]</scope>
</reference>
<reference key="2">
    <citation type="journal article" date="1991" name="FEBS Lett.">
        <title>Heterogeneity in the Xenopus ribosomal transcription factor xUBF has a molecular basis distinct from that in mammals.</title>
        <authorList>
            <person name="Bachvarov D."/>
            <person name="Normandeau M."/>
            <person name="Moss T."/>
        </authorList>
    </citation>
    <scope>NUCLEOTIDE SEQUENCE [MRNA]</scope>
</reference>
<reference key="3">
    <citation type="journal article" date="1991" name="Genes Dev.">
        <title>xUBF contains a novel dimerization domain essential for RNA polymerase I transcription.</title>
        <authorList>
            <person name="McStay B."/>
            <person name="Frazier M.W."/>
            <person name="Reeder R.H."/>
        </authorList>
    </citation>
    <scope>DOMAINS</scope>
</reference>
<evidence type="ECO:0000255" key="1">
    <source>
        <dbReference type="PROSITE-ProRule" id="PRU00267"/>
    </source>
</evidence>
<evidence type="ECO:0000256" key="2">
    <source>
        <dbReference type="SAM" id="MobiDB-lite"/>
    </source>
</evidence>
<evidence type="ECO:0000305" key="3"/>
<sequence>MNGAAGGDTQGKMTAPKDQDQWSQEDMLTLLQTMKTLLPGQDNSKFKTTESHLDWNKLAFKHYSGSMCRQKWMEISNEVRKFRTLTELILDADEHVRHPYKGKKLKKHPEFPKKPLTPYFRFFMEKRAKYAKLHPEMSNLDLTKILSKKYKELPEKKKMKYIQDFQREKQDFERNMAKFREEHPDLMQNPKKSDVPEKPKTPQQLWYNHERKVYLKLHADASTKDIKDALGKQWSQLPDKKRLKWIHKALEQRKQYEGVMREYMQKHPELNITEEGITRSTLTKAERQLKDKFDGRPTKPPPNSYSMYCAELMANMKDVPSTERMVLCSQRWKLLSQKEKDAYHKKCEQRKKDYEVELMRFLENLPEEEQQRVLAEEKMVGMKRKRTNTPASKMATEDAAKVKSRSGQADKKKAAEERAKLPETPKTAEEIWQQSVIGDYLARFKNDRAKALKVMEATWLNMEKKEKIMWIKKAAEDQKRYERELSDMRSTPAPTTAGKKVKFLGEPKKAPMNGYQKFSQELLSNGELNHLPLKERMVEIGSRWHRISPTQKDYYKKLAEDQQRLYRTQFDTWMKGLSTQDRAAYKEQNTNKRKSTTKIQAPSSKSKLVIQSKSDDDEDDEDDEDEEDDDDDDDEDKEDSSEDGDSSDSSSDEDSEEGEENEDEEDEEDDDEDNEEDDDDNESGSSSSSSSSADSSDSDSN</sequence>
<keyword id="KW-0010">Activator</keyword>
<keyword id="KW-0238">DNA-binding</keyword>
<keyword id="KW-0539">Nucleus</keyword>
<keyword id="KW-1185">Reference proteome</keyword>
<keyword id="KW-0677">Repeat</keyword>
<keyword id="KW-0804">Transcription</keyword>
<keyword id="KW-0805">Transcription regulation</keyword>
<feature type="chain" id="PRO_0000048629" description="Nucleolar transcription factor 1-B">
    <location>
        <begin position="1"/>
        <end position="701"/>
    </location>
</feature>
<feature type="DNA-binding region" description="HMG box 1" evidence="1">
    <location>
        <begin position="112"/>
        <end position="180"/>
    </location>
</feature>
<feature type="DNA-binding region" description="HMG box 2" evidence="1">
    <location>
        <begin position="196"/>
        <end position="264"/>
    </location>
</feature>
<feature type="DNA-binding region" description="HMG box 3" evidence="1">
    <location>
        <begin position="298"/>
        <end position="362"/>
    </location>
</feature>
<feature type="DNA-binding region" description="HMG box 4" evidence="1">
    <location>
        <begin position="422"/>
        <end position="489"/>
    </location>
</feature>
<feature type="DNA-binding region" description="HMG box 5" evidence="1">
    <location>
        <begin position="508"/>
        <end position="574"/>
    </location>
</feature>
<feature type="region of interest" description="Disordered" evidence="2">
    <location>
        <begin position="1"/>
        <end position="21"/>
    </location>
</feature>
<feature type="region of interest" description="Disordered" evidence="2">
    <location>
        <begin position="382"/>
        <end position="426"/>
    </location>
</feature>
<feature type="region of interest" description="Disordered" evidence="2">
    <location>
        <begin position="584"/>
        <end position="701"/>
    </location>
</feature>
<feature type="compositionally biased region" description="Basic and acidic residues" evidence="2">
    <location>
        <begin position="408"/>
        <end position="426"/>
    </location>
</feature>
<feature type="compositionally biased region" description="Polar residues" evidence="2">
    <location>
        <begin position="597"/>
        <end position="612"/>
    </location>
</feature>
<feature type="compositionally biased region" description="Acidic residues" evidence="2">
    <location>
        <begin position="615"/>
        <end position="682"/>
    </location>
</feature>
<feature type="compositionally biased region" description="Low complexity" evidence="2">
    <location>
        <begin position="683"/>
        <end position="695"/>
    </location>
</feature>
<feature type="sequence conflict" description="In Ref. 2; CAA42523." evidence="3" ref="2">
    <original>Q</original>
    <variation>H</variation>
    <location>
        <position position="32"/>
    </location>
</feature>
<feature type="sequence conflict" description="In Ref. 2; CAA42523." evidence="3" ref="2">
    <original>V</original>
    <variation>A</variation>
    <location>
        <position position="538"/>
    </location>
</feature>
<feature type="sequence conflict" description="In Ref. 2; CAA42523." evidence="3" ref="2">
    <original>D</original>
    <variation>E</variation>
    <location>
        <position position="669"/>
    </location>
</feature>
<accession>P25980</accession>
<name>UBF1B_XENLA</name>